<accession>C0HLQ2</accession>
<proteinExistence type="evidence at protein level"/>
<dbReference type="SMR" id="C0HLQ2"/>
<dbReference type="InterPro" id="IPR003854">
    <property type="entry name" value="GASA"/>
</dbReference>
<dbReference type="PANTHER" id="PTHR23201">
    <property type="entry name" value="EXTENSIN, PROLINE-RICH PROTEIN"/>
    <property type="match status" value="1"/>
</dbReference>
<dbReference type="PANTHER" id="PTHR23201:SF141">
    <property type="entry name" value="GIBBERELLIN-REGULATED PROTEIN 10"/>
    <property type="match status" value="1"/>
</dbReference>
<dbReference type="Pfam" id="PF02704">
    <property type="entry name" value="GASA"/>
    <property type="match status" value="1"/>
</dbReference>
<evidence type="ECO:0000250" key="1">
    <source>
        <dbReference type="UniProtKB" id="C0HLL6"/>
    </source>
</evidence>
<evidence type="ECO:0000269" key="2">
    <source>
    </source>
</evidence>
<evidence type="ECO:0000303" key="3">
    <source>
    </source>
</evidence>
<evidence type="ECO:0000305" key="4"/>
<name>CMLN1_CUPSE</name>
<protein>
    <recommendedName>
        <fullName evidence="1">Cypmaclein</fullName>
    </recommendedName>
    <allergenName evidence="3">Cup s 7</allergenName>
</protein>
<comment type="tissue specificity">
    <text evidence="2">Expressed in pollen (at protein level).</text>
</comment>
<comment type="mass spectrometry" mass="6828.98" method="Electrospray" evidence="2"/>
<comment type="allergen">
    <text evidence="2">Causes an allergic reaction in human. Binds to IgE in 32% of 88 patients with cypress pollen sensitivity.</text>
</comment>
<comment type="similarity">
    <text evidence="4">Belongs to the GASA family.</text>
</comment>
<reference evidence="4" key="1">
    <citation type="journal article" date="2020" name="Clin. Exp. Allergy">
        <title>Characterization of a 7 kDa pollen allergen belonging to the gibberellin-regulated protein family from three Cupressaceae species.</title>
        <authorList>
            <person name="Ehrenberg A.E."/>
            <person name="Klingebiel C."/>
            <person name="Oestling J."/>
            <person name="Larsson H."/>
            <person name="Mattsson L."/>
            <person name="Vitte J."/>
            <person name="Lidholm J."/>
        </authorList>
    </citation>
    <scope>PROTEIN SEQUENCE</scope>
    <scope>SYNTHESIS</scope>
    <scope>TISSUE SPECIFICITY</scope>
    <scope>MASS SPECTROMETRY</scope>
    <scope>ALLERGEN</scope>
    <source>
        <tissue evidence="3">Pollen</tissue>
    </source>
</reference>
<keyword id="KW-0020">Allergen</keyword>
<keyword id="KW-0903">Direct protein sequencing</keyword>
<sequence length="63" mass="6834">AQIDCDKECNRRCSKASAHDRCLKYCGICCEKCHCVPPGTAGNEDVCPCYANLKNSKGGHKCP</sequence>
<organism>
    <name type="scientific">Cupressus sempervirens</name>
    <name type="common">Italian cypress</name>
    <dbReference type="NCBI Taxonomy" id="13469"/>
    <lineage>
        <taxon>Eukaryota</taxon>
        <taxon>Viridiplantae</taxon>
        <taxon>Streptophyta</taxon>
        <taxon>Embryophyta</taxon>
        <taxon>Tracheophyta</taxon>
        <taxon>Spermatophyta</taxon>
        <taxon>Pinopsida</taxon>
        <taxon>Pinidae</taxon>
        <taxon>Conifers II</taxon>
        <taxon>Cupressales</taxon>
        <taxon>Cupressaceae</taxon>
        <taxon>Cupressus</taxon>
    </lineage>
</organism>
<feature type="chain" id="PRO_0000451766" description="Cypmaclein">
    <location>
        <begin position="1"/>
        <end position="63"/>
    </location>
</feature>